<dbReference type="EC" id="3.6.-.-" evidence="1"/>
<dbReference type="EMBL" id="AE007869">
    <property type="protein sequence ID" value="AAK88543.1"/>
    <property type="molecule type" value="Genomic_DNA"/>
</dbReference>
<dbReference type="PIR" id="AG2924">
    <property type="entry name" value="AG2924"/>
</dbReference>
<dbReference type="PIR" id="F97698">
    <property type="entry name" value="F97698"/>
</dbReference>
<dbReference type="RefSeq" id="NP_355758.1">
    <property type="nucleotide sequence ID" value="NC_003062.2"/>
</dbReference>
<dbReference type="RefSeq" id="WP_010972599.1">
    <property type="nucleotide sequence ID" value="NC_003062.2"/>
</dbReference>
<dbReference type="SMR" id="A9CHB2"/>
<dbReference type="STRING" id="176299.Atu2832"/>
<dbReference type="EnsemblBacteria" id="AAK88543">
    <property type="protein sequence ID" value="AAK88543"/>
    <property type="gene ID" value="Atu2832"/>
</dbReference>
<dbReference type="GeneID" id="1134870"/>
<dbReference type="KEGG" id="atu:Atu2832"/>
<dbReference type="PATRIC" id="fig|176299.10.peg.2841"/>
<dbReference type="eggNOG" id="COG0486">
    <property type="taxonomic scope" value="Bacteria"/>
</dbReference>
<dbReference type="HOGENOM" id="CLU_019624_3_1_5"/>
<dbReference type="OrthoDB" id="9805918at2"/>
<dbReference type="PhylomeDB" id="A9CHB2"/>
<dbReference type="BioCyc" id="AGRO:ATU2832-MONOMER"/>
<dbReference type="Proteomes" id="UP000000813">
    <property type="component" value="Chromosome circular"/>
</dbReference>
<dbReference type="GO" id="GO:0005737">
    <property type="term" value="C:cytoplasm"/>
    <property type="evidence" value="ECO:0007669"/>
    <property type="project" value="UniProtKB-SubCell"/>
</dbReference>
<dbReference type="GO" id="GO:0005525">
    <property type="term" value="F:GTP binding"/>
    <property type="evidence" value="ECO:0007669"/>
    <property type="project" value="UniProtKB-UniRule"/>
</dbReference>
<dbReference type="GO" id="GO:0003924">
    <property type="term" value="F:GTPase activity"/>
    <property type="evidence" value="ECO:0007669"/>
    <property type="project" value="UniProtKB-UniRule"/>
</dbReference>
<dbReference type="GO" id="GO:0046872">
    <property type="term" value="F:metal ion binding"/>
    <property type="evidence" value="ECO:0007669"/>
    <property type="project" value="UniProtKB-KW"/>
</dbReference>
<dbReference type="GO" id="GO:0030488">
    <property type="term" value="P:tRNA methylation"/>
    <property type="evidence" value="ECO:0007669"/>
    <property type="project" value="TreeGrafter"/>
</dbReference>
<dbReference type="GO" id="GO:0002098">
    <property type="term" value="P:tRNA wobble uridine modification"/>
    <property type="evidence" value="ECO:0007669"/>
    <property type="project" value="TreeGrafter"/>
</dbReference>
<dbReference type="CDD" id="cd04164">
    <property type="entry name" value="trmE"/>
    <property type="match status" value="1"/>
</dbReference>
<dbReference type="CDD" id="cd14858">
    <property type="entry name" value="TrmE_N"/>
    <property type="match status" value="1"/>
</dbReference>
<dbReference type="FunFam" id="3.30.1360.120:FF:000007">
    <property type="entry name" value="tRNA modification GTPase GTPBP3, mitochondrial"/>
    <property type="match status" value="1"/>
</dbReference>
<dbReference type="Gene3D" id="3.40.50.300">
    <property type="entry name" value="P-loop containing nucleotide triphosphate hydrolases"/>
    <property type="match status" value="1"/>
</dbReference>
<dbReference type="Gene3D" id="3.30.1360.120">
    <property type="entry name" value="Probable tRNA modification gtpase trme, domain 1"/>
    <property type="match status" value="1"/>
</dbReference>
<dbReference type="Gene3D" id="1.20.120.430">
    <property type="entry name" value="tRNA modification GTPase MnmE domain 2"/>
    <property type="match status" value="1"/>
</dbReference>
<dbReference type="HAMAP" id="MF_00379">
    <property type="entry name" value="GTPase_MnmE"/>
    <property type="match status" value="1"/>
</dbReference>
<dbReference type="InterPro" id="IPR031168">
    <property type="entry name" value="G_TrmE"/>
</dbReference>
<dbReference type="InterPro" id="IPR006073">
    <property type="entry name" value="GTP-bd"/>
</dbReference>
<dbReference type="InterPro" id="IPR018948">
    <property type="entry name" value="GTP-bd_TrmE_N"/>
</dbReference>
<dbReference type="InterPro" id="IPR004520">
    <property type="entry name" value="GTPase_MnmE"/>
</dbReference>
<dbReference type="InterPro" id="IPR027368">
    <property type="entry name" value="MnmE_dom2"/>
</dbReference>
<dbReference type="InterPro" id="IPR025867">
    <property type="entry name" value="MnmE_helical"/>
</dbReference>
<dbReference type="InterPro" id="IPR027417">
    <property type="entry name" value="P-loop_NTPase"/>
</dbReference>
<dbReference type="InterPro" id="IPR005225">
    <property type="entry name" value="Small_GTP-bd"/>
</dbReference>
<dbReference type="InterPro" id="IPR027266">
    <property type="entry name" value="TrmE/GcvT_dom1"/>
</dbReference>
<dbReference type="NCBIfam" id="TIGR00450">
    <property type="entry name" value="mnmE_trmE_thdF"/>
    <property type="match status" value="1"/>
</dbReference>
<dbReference type="NCBIfam" id="NF003661">
    <property type="entry name" value="PRK05291.1-3"/>
    <property type="match status" value="1"/>
</dbReference>
<dbReference type="NCBIfam" id="TIGR00231">
    <property type="entry name" value="small_GTP"/>
    <property type="match status" value="1"/>
</dbReference>
<dbReference type="PANTHER" id="PTHR42714">
    <property type="entry name" value="TRNA MODIFICATION GTPASE GTPBP3"/>
    <property type="match status" value="1"/>
</dbReference>
<dbReference type="PANTHER" id="PTHR42714:SF2">
    <property type="entry name" value="TRNA MODIFICATION GTPASE GTPBP3, MITOCHONDRIAL"/>
    <property type="match status" value="1"/>
</dbReference>
<dbReference type="Pfam" id="PF01926">
    <property type="entry name" value="MMR_HSR1"/>
    <property type="match status" value="1"/>
</dbReference>
<dbReference type="Pfam" id="PF12631">
    <property type="entry name" value="MnmE_helical"/>
    <property type="match status" value="1"/>
</dbReference>
<dbReference type="Pfam" id="PF10396">
    <property type="entry name" value="TrmE_N"/>
    <property type="match status" value="1"/>
</dbReference>
<dbReference type="SUPFAM" id="SSF103025">
    <property type="entry name" value="Folate-binding domain"/>
    <property type="match status" value="1"/>
</dbReference>
<dbReference type="SUPFAM" id="SSF52540">
    <property type="entry name" value="P-loop containing nucleoside triphosphate hydrolases"/>
    <property type="match status" value="1"/>
</dbReference>
<dbReference type="SUPFAM" id="SSF116878">
    <property type="entry name" value="TrmE connector domain"/>
    <property type="match status" value="1"/>
</dbReference>
<dbReference type="PROSITE" id="PS51709">
    <property type="entry name" value="G_TRME"/>
    <property type="match status" value="1"/>
</dbReference>
<evidence type="ECO:0000255" key="1">
    <source>
        <dbReference type="HAMAP-Rule" id="MF_00379"/>
    </source>
</evidence>
<keyword id="KW-0963">Cytoplasm</keyword>
<keyword id="KW-0342">GTP-binding</keyword>
<keyword id="KW-0378">Hydrolase</keyword>
<keyword id="KW-0460">Magnesium</keyword>
<keyword id="KW-0479">Metal-binding</keyword>
<keyword id="KW-0547">Nucleotide-binding</keyword>
<keyword id="KW-0630">Potassium</keyword>
<keyword id="KW-1185">Reference proteome</keyword>
<keyword id="KW-0819">tRNA processing</keyword>
<accession>A9CHB2</accession>
<organism>
    <name type="scientific">Agrobacterium fabrum (strain C58 / ATCC 33970)</name>
    <name type="common">Agrobacterium tumefaciens (strain C58)</name>
    <dbReference type="NCBI Taxonomy" id="176299"/>
    <lineage>
        <taxon>Bacteria</taxon>
        <taxon>Pseudomonadati</taxon>
        <taxon>Pseudomonadota</taxon>
        <taxon>Alphaproteobacteria</taxon>
        <taxon>Hyphomicrobiales</taxon>
        <taxon>Rhizobiaceae</taxon>
        <taxon>Rhizobium/Agrobacterium group</taxon>
        <taxon>Agrobacterium</taxon>
        <taxon>Agrobacterium tumefaciens complex</taxon>
    </lineage>
</organism>
<proteinExistence type="inferred from homology"/>
<reference key="1">
    <citation type="journal article" date="2001" name="Science">
        <title>The genome of the natural genetic engineer Agrobacterium tumefaciens C58.</title>
        <authorList>
            <person name="Wood D.W."/>
            <person name="Setubal J.C."/>
            <person name="Kaul R."/>
            <person name="Monks D.E."/>
            <person name="Kitajima J.P."/>
            <person name="Okura V.K."/>
            <person name="Zhou Y."/>
            <person name="Chen L."/>
            <person name="Wood G.E."/>
            <person name="Almeida N.F. Jr."/>
            <person name="Woo L."/>
            <person name="Chen Y."/>
            <person name="Paulsen I.T."/>
            <person name="Eisen J.A."/>
            <person name="Karp P.D."/>
            <person name="Bovee D. Sr."/>
            <person name="Chapman P."/>
            <person name="Clendenning J."/>
            <person name="Deatherage G."/>
            <person name="Gillet W."/>
            <person name="Grant C."/>
            <person name="Kutyavin T."/>
            <person name="Levy R."/>
            <person name="Li M.-J."/>
            <person name="McClelland E."/>
            <person name="Palmieri A."/>
            <person name="Raymond C."/>
            <person name="Rouse G."/>
            <person name="Saenphimmachak C."/>
            <person name="Wu Z."/>
            <person name="Romero P."/>
            <person name="Gordon D."/>
            <person name="Zhang S."/>
            <person name="Yoo H."/>
            <person name="Tao Y."/>
            <person name="Biddle P."/>
            <person name="Jung M."/>
            <person name="Krespan W."/>
            <person name="Perry M."/>
            <person name="Gordon-Kamm B."/>
            <person name="Liao L."/>
            <person name="Kim S."/>
            <person name="Hendrick C."/>
            <person name="Zhao Z.-Y."/>
            <person name="Dolan M."/>
            <person name="Chumley F."/>
            <person name="Tingey S.V."/>
            <person name="Tomb J.-F."/>
            <person name="Gordon M.P."/>
            <person name="Olson M.V."/>
            <person name="Nester E.W."/>
        </authorList>
    </citation>
    <scope>NUCLEOTIDE SEQUENCE [LARGE SCALE GENOMIC DNA]</scope>
    <source>
        <strain>C58 / ATCC 33970</strain>
    </source>
</reference>
<reference key="2">
    <citation type="journal article" date="2001" name="Science">
        <title>Genome sequence of the plant pathogen and biotechnology agent Agrobacterium tumefaciens C58.</title>
        <authorList>
            <person name="Goodner B."/>
            <person name="Hinkle G."/>
            <person name="Gattung S."/>
            <person name="Miller N."/>
            <person name="Blanchard M."/>
            <person name="Qurollo B."/>
            <person name="Goldman B.S."/>
            <person name="Cao Y."/>
            <person name="Askenazi M."/>
            <person name="Halling C."/>
            <person name="Mullin L."/>
            <person name="Houmiel K."/>
            <person name="Gordon J."/>
            <person name="Vaudin M."/>
            <person name="Iartchouk O."/>
            <person name="Epp A."/>
            <person name="Liu F."/>
            <person name="Wollam C."/>
            <person name="Allinger M."/>
            <person name="Doughty D."/>
            <person name="Scott C."/>
            <person name="Lappas C."/>
            <person name="Markelz B."/>
            <person name="Flanagan C."/>
            <person name="Crowell C."/>
            <person name="Gurson J."/>
            <person name="Lomo C."/>
            <person name="Sear C."/>
            <person name="Strub G."/>
            <person name="Cielo C."/>
            <person name="Slater S."/>
        </authorList>
    </citation>
    <scope>NUCLEOTIDE SEQUENCE [LARGE SCALE GENOMIC DNA]</scope>
    <source>
        <strain>C58 / ATCC 33970</strain>
    </source>
</reference>
<gene>
    <name evidence="1" type="primary">mnmE</name>
    <name evidence="1" type="synonym">trmE</name>
    <name type="ordered locus">Atu2832</name>
    <name type="ORF">AGR_C_5135</name>
</gene>
<comment type="function">
    <text evidence="1">Exhibits a very high intrinsic GTPase hydrolysis rate. Involved in the addition of a carboxymethylaminomethyl (cmnm) group at the wobble position (U34) of certain tRNAs, forming tRNA-cmnm(5)s(2)U34.</text>
</comment>
<comment type="cofactor">
    <cofactor evidence="1">
        <name>K(+)</name>
        <dbReference type="ChEBI" id="CHEBI:29103"/>
    </cofactor>
    <text evidence="1">Binds 1 potassium ion per subunit.</text>
</comment>
<comment type="subunit">
    <text evidence="1">Homodimer. Heterotetramer of two MnmE and two MnmG subunits.</text>
</comment>
<comment type="subcellular location">
    <subcellularLocation>
        <location evidence="1">Cytoplasm</location>
    </subcellularLocation>
</comment>
<comment type="similarity">
    <text evidence="1">Belongs to the TRAFAC class TrmE-Era-EngA-EngB-Septin-like GTPase superfamily. TrmE GTPase family.</text>
</comment>
<feature type="chain" id="PRO_0000345702" description="tRNA modification GTPase MnmE">
    <location>
        <begin position="1"/>
        <end position="442"/>
    </location>
</feature>
<feature type="domain" description="TrmE-type G">
    <location>
        <begin position="219"/>
        <end position="366"/>
    </location>
</feature>
<feature type="binding site" evidence="1">
    <location>
        <position position="24"/>
    </location>
    <ligand>
        <name>(6S)-5-formyl-5,6,7,8-tetrahydrofolate</name>
        <dbReference type="ChEBI" id="CHEBI:57457"/>
    </ligand>
</feature>
<feature type="binding site" evidence="1">
    <location>
        <position position="82"/>
    </location>
    <ligand>
        <name>(6S)-5-formyl-5,6,7,8-tetrahydrofolate</name>
        <dbReference type="ChEBI" id="CHEBI:57457"/>
    </ligand>
</feature>
<feature type="binding site" evidence="1">
    <location>
        <position position="122"/>
    </location>
    <ligand>
        <name>(6S)-5-formyl-5,6,7,8-tetrahydrofolate</name>
        <dbReference type="ChEBI" id="CHEBI:57457"/>
    </ligand>
</feature>
<feature type="binding site" evidence="1">
    <location>
        <begin position="229"/>
        <end position="234"/>
    </location>
    <ligand>
        <name>GTP</name>
        <dbReference type="ChEBI" id="CHEBI:37565"/>
    </ligand>
</feature>
<feature type="binding site" evidence="1">
    <location>
        <position position="229"/>
    </location>
    <ligand>
        <name>K(+)</name>
        <dbReference type="ChEBI" id="CHEBI:29103"/>
    </ligand>
</feature>
<feature type="binding site" evidence="1">
    <location>
        <position position="233"/>
    </location>
    <ligand>
        <name>Mg(2+)</name>
        <dbReference type="ChEBI" id="CHEBI:18420"/>
    </ligand>
</feature>
<feature type="binding site" evidence="1">
    <location>
        <begin position="248"/>
        <end position="254"/>
    </location>
    <ligand>
        <name>GTP</name>
        <dbReference type="ChEBI" id="CHEBI:37565"/>
    </ligand>
</feature>
<feature type="binding site" evidence="1">
    <location>
        <position position="248"/>
    </location>
    <ligand>
        <name>K(+)</name>
        <dbReference type="ChEBI" id="CHEBI:29103"/>
    </ligand>
</feature>
<feature type="binding site" evidence="1">
    <location>
        <position position="250"/>
    </location>
    <ligand>
        <name>K(+)</name>
        <dbReference type="ChEBI" id="CHEBI:29103"/>
    </ligand>
</feature>
<feature type="binding site" evidence="1">
    <location>
        <position position="253"/>
    </location>
    <ligand>
        <name>K(+)</name>
        <dbReference type="ChEBI" id="CHEBI:29103"/>
    </ligand>
</feature>
<feature type="binding site" evidence="1">
    <location>
        <position position="254"/>
    </location>
    <ligand>
        <name>Mg(2+)</name>
        <dbReference type="ChEBI" id="CHEBI:18420"/>
    </ligand>
</feature>
<feature type="binding site" evidence="1">
    <location>
        <begin position="273"/>
        <end position="276"/>
    </location>
    <ligand>
        <name>GTP</name>
        <dbReference type="ChEBI" id="CHEBI:37565"/>
    </ligand>
</feature>
<feature type="binding site" evidence="1">
    <location>
        <position position="442"/>
    </location>
    <ligand>
        <name>(6S)-5-formyl-5,6,7,8-tetrahydrofolate</name>
        <dbReference type="ChEBI" id="CHEBI:57457"/>
    </ligand>
</feature>
<protein>
    <recommendedName>
        <fullName evidence="1">tRNA modification GTPase MnmE</fullName>
        <ecNumber evidence="1">3.6.-.-</ecNumber>
    </recommendedName>
</protein>
<sequence length="442" mass="47958">MPDSADTIYALSSGALPAGVAVIRISGAKAFIALRALTGRDLPLPRTASLCSIRNRNNEIIDQSLVIVFPAPNSFTGENCVEIHSHGSRAVMASIFAELDNLGGLRPADAGEFSRRAFENGKMDLLEVEGLADLLQAETEMQRRLAVEQSSGQLSALYDGWANRLTRARALIEAELDFADEEDVPDSVATQVWEAMAALKGEINAHLQGGGNGEIIRDGFKVALVGEPNAGKSTLLNALSGREVAIVTDIAGTTRDVLSVDINLDGYLVRIFDTAGIRETQDVVEREGVRRAVLTAETADLILILQDNDSTPKQSIGSFDNQRSLRVRTKTLLRSRASDDDFDLSISAKEGIGLDELRRALKREIEKRVGSGQTLVPARARHKKRLEETLNYVSDALDSETLDLAIRSEYLRLAATSLGRITGRVDVEDLLGVIFSEFCIGK</sequence>
<name>MNME_AGRFC</name>